<proteinExistence type="evidence at transcript level"/>
<comment type="subunit">
    <text evidence="1">Component of the small ribosomal subunit. Mature ribosomes consist of a small (40S) and a large (60S) subunit. The 40S subunit contains about 33 different proteins and 1 molecule of RNA (18S). The 60S subunit contains about 49 different proteins and 3 molecules of RNA (25S, 5.8S and 5S).</text>
</comment>
<comment type="subcellular location">
    <subcellularLocation>
        <location evidence="1">Cytoplasm</location>
    </subcellularLocation>
</comment>
<comment type="similarity">
    <text evidence="1">Belongs to the eukaryotic ribosomal protein eS1 family.</text>
</comment>
<sequence>MAVGKNKRISKGRKGGKKKAVDPFSKKDWYDVKAPGSFTNRNVGKTLVSRTQGTKIASEGLKHRVFEVSLADLQNDEDNAYRKIRLRAEDVQGRNVLTQFWGMDFTTDKLRSLVKKWQTLIEAHVDVKTTDGYTLRMFCIAFTKRRANQVKRTCYAQSSQIRQIRRKMSEIMVKEASSCDLKELVAKFIPEAIGREIEKATQGIYPLQNVFIRKVKILKAPKFDLGKLMEVHGDYTAEDVGVKVDRPADETMVEEPTEIIGA</sequence>
<reference key="1">
    <citation type="submission" date="1997-09" db="EMBL/GenBank/DDBJ databases">
        <title>Primary structure and expression of a cyc07 homologue from Arabidopsis thaliana.</title>
        <authorList>
            <person name="Andreeva A.V."/>
            <person name="Kutuzov M.A."/>
            <person name="Hawes C.R."/>
            <person name="Evans D.E."/>
        </authorList>
    </citation>
    <scope>NUCLEOTIDE SEQUENCE [MRNA]</scope>
    <source>
        <strain>cv. Columbia</strain>
        <tissue>Seedling hypocotyl</tissue>
    </source>
</reference>
<reference key="2">
    <citation type="journal article" date="1999" name="Nature">
        <title>Sequence and analysis of chromosome 4 of the plant Arabidopsis thaliana.</title>
        <authorList>
            <person name="Mayer K.F.X."/>
            <person name="Schueller C."/>
            <person name="Wambutt R."/>
            <person name="Murphy G."/>
            <person name="Volckaert G."/>
            <person name="Pohl T."/>
            <person name="Duesterhoeft A."/>
            <person name="Stiekema W."/>
            <person name="Entian K.-D."/>
            <person name="Terryn N."/>
            <person name="Harris B."/>
            <person name="Ansorge W."/>
            <person name="Brandt P."/>
            <person name="Grivell L.A."/>
            <person name="Rieger M."/>
            <person name="Weichselgartner M."/>
            <person name="de Simone V."/>
            <person name="Obermaier B."/>
            <person name="Mache R."/>
            <person name="Mueller M."/>
            <person name="Kreis M."/>
            <person name="Delseny M."/>
            <person name="Puigdomenech P."/>
            <person name="Watson M."/>
            <person name="Schmidtheini T."/>
            <person name="Reichert B."/>
            <person name="Portetelle D."/>
            <person name="Perez-Alonso M."/>
            <person name="Boutry M."/>
            <person name="Bancroft I."/>
            <person name="Vos P."/>
            <person name="Hoheisel J."/>
            <person name="Zimmermann W."/>
            <person name="Wedler H."/>
            <person name="Ridley P."/>
            <person name="Langham S.-A."/>
            <person name="McCullagh B."/>
            <person name="Bilham L."/>
            <person name="Robben J."/>
            <person name="van der Schueren J."/>
            <person name="Grymonprez B."/>
            <person name="Chuang Y.-J."/>
            <person name="Vandenbussche F."/>
            <person name="Braeken M."/>
            <person name="Weltjens I."/>
            <person name="Voet M."/>
            <person name="Bastiaens I."/>
            <person name="Aert R."/>
            <person name="Defoor E."/>
            <person name="Weitzenegger T."/>
            <person name="Bothe G."/>
            <person name="Ramsperger U."/>
            <person name="Hilbert H."/>
            <person name="Braun M."/>
            <person name="Holzer E."/>
            <person name="Brandt A."/>
            <person name="Peters S."/>
            <person name="van Staveren M."/>
            <person name="Dirkse W."/>
            <person name="Mooijman P."/>
            <person name="Klein Lankhorst R."/>
            <person name="Rose M."/>
            <person name="Hauf J."/>
            <person name="Koetter P."/>
            <person name="Berneiser S."/>
            <person name="Hempel S."/>
            <person name="Feldpausch M."/>
            <person name="Lamberth S."/>
            <person name="Van den Daele H."/>
            <person name="De Keyser A."/>
            <person name="Buysshaert C."/>
            <person name="Gielen J."/>
            <person name="Villarroel R."/>
            <person name="De Clercq R."/>
            <person name="van Montagu M."/>
            <person name="Rogers J."/>
            <person name="Cronin A."/>
            <person name="Quail M.A."/>
            <person name="Bray-Allen S."/>
            <person name="Clark L."/>
            <person name="Doggett J."/>
            <person name="Hall S."/>
            <person name="Kay M."/>
            <person name="Lennard N."/>
            <person name="McLay K."/>
            <person name="Mayes R."/>
            <person name="Pettett A."/>
            <person name="Rajandream M.A."/>
            <person name="Lyne M."/>
            <person name="Benes V."/>
            <person name="Rechmann S."/>
            <person name="Borkova D."/>
            <person name="Bloecker H."/>
            <person name="Scharfe M."/>
            <person name="Grimm M."/>
            <person name="Loehnert T.-H."/>
            <person name="Dose S."/>
            <person name="de Haan M."/>
            <person name="Maarse A.C."/>
            <person name="Schaefer M."/>
            <person name="Mueller-Auer S."/>
            <person name="Gabel C."/>
            <person name="Fuchs M."/>
            <person name="Fartmann B."/>
            <person name="Granderath K."/>
            <person name="Dauner D."/>
            <person name="Herzl A."/>
            <person name="Neumann S."/>
            <person name="Argiriou A."/>
            <person name="Vitale D."/>
            <person name="Liguori R."/>
            <person name="Piravandi E."/>
            <person name="Massenet O."/>
            <person name="Quigley F."/>
            <person name="Clabauld G."/>
            <person name="Muendlein A."/>
            <person name="Felber R."/>
            <person name="Schnabl S."/>
            <person name="Hiller R."/>
            <person name="Schmidt W."/>
            <person name="Lecharny A."/>
            <person name="Aubourg S."/>
            <person name="Chefdor F."/>
            <person name="Cooke R."/>
            <person name="Berger C."/>
            <person name="Monfort A."/>
            <person name="Casacuberta E."/>
            <person name="Gibbons T."/>
            <person name="Weber N."/>
            <person name="Vandenbol M."/>
            <person name="Bargues M."/>
            <person name="Terol J."/>
            <person name="Torres A."/>
            <person name="Perez-Perez A."/>
            <person name="Purnelle B."/>
            <person name="Bent E."/>
            <person name="Johnson S."/>
            <person name="Tacon D."/>
            <person name="Jesse T."/>
            <person name="Heijnen L."/>
            <person name="Schwarz S."/>
            <person name="Scholler P."/>
            <person name="Heber S."/>
            <person name="Francs P."/>
            <person name="Bielke C."/>
            <person name="Frishman D."/>
            <person name="Haase D."/>
            <person name="Lemcke K."/>
            <person name="Mewes H.-W."/>
            <person name="Stocker S."/>
            <person name="Zaccaria P."/>
            <person name="Bevan M."/>
            <person name="Wilson R.K."/>
            <person name="de la Bastide M."/>
            <person name="Habermann K."/>
            <person name="Parnell L."/>
            <person name="Dedhia N."/>
            <person name="Gnoj L."/>
            <person name="Schutz K."/>
            <person name="Huang E."/>
            <person name="Spiegel L."/>
            <person name="Sekhon M."/>
            <person name="Murray J."/>
            <person name="Sheet P."/>
            <person name="Cordes M."/>
            <person name="Abu-Threideh J."/>
            <person name="Stoneking T."/>
            <person name="Kalicki J."/>
            <person name="Graves T."/>
            <person name="Harmon G."/>
            <person name="Edwards J."/>
            <person name="Latreille P."/>
            <person name="Courtney L."/>
            <person name="Cloud J."/>
            <person name="Abbott A."/>
            <person name="Scott K."/>
            <person name="Johnson D."/>
            <person name="Minx P."/>
            <person name="Bentley D."/>
            <person name="Fulton B."/>
            <person name="Miller N."/>
            <person name="Greco T."/>
            <person name="Kemp K."/>
            <person name="Kramer J."/>
            <person name="Fulton L."/>
            <person name="Mardis E."/>
            <person name="Dante M."/>
            <person name="Pepin K."/>
            <person name="Hillier L.W."/>
            <person name="Nelson J."/>
            <person name="Spieth J."/>
            <person name="Ryan E."/>
            <person name="Andrews S."/>
            <person name="Geisel C."/>
            <person name="Layman D."/>
            <person name="Du H."/>
            <person name="Ali J."/>
            <person name="Berghoff A."/>
            <person name="Jones K."/>
            <person name="Drone K."/>
            <person name="Cotton M."/>
            <person name="Joshu C."/>
            <person name="Antonoiu B."/>
            <person name="Zidanic M."/>
            <person name="Strong C."/>
            <person name="Sun H."/>
            <person name="Lamar B."/>
            <person name="Yordan C."/>
            <person name="Ma P."/>
            <person name="Zhong J."/>
            <person name="Preston R."/>
            <person name="Vil D."/>
            <person name="Shekher M."/>
            <person name="Matero A."/>
            <person name="Shah R."/>
            <person name="Swaby I.K."/>
            <person name="O'Shaughnessy A."/>
            <person name="Rodriguez M."/>
            <person name="Hoffman J."/>
            <person name="Till S."/>
            <person name="Granat S."/>
            <person name="Shohdy N."/>
            <person name="Hasegawa A."/>
            <person name="Hameed A."/>
            <person name="Lodhi M."/>
            <person name="Johnson A."/>
            <person name="Chen E."/>
            <person name="Marra M.A."/>
            <person name="Martienssen R."/>
            <person name="McCombie W.R."/>
        </authorList>
    </citation>
    <scope>NUCLEOTIDE SEQUENCE [LARGE SCALE GENOMIC DNA]</scope>
    <source>
        <strain>cv. Columbia</strain>
    </source>
</reference>
<reference key="3">
    <citation type="journal article" date="2017" name="Plant J.">
        <title>Araport11: a complete reannotation of the Arabidopsis thaliana reference genome.</title>
        <authorList>
            <person name="Cheng C.Y."/>
            <person name="Krishnakumar V."/>
            <person name="Chan A.P."/>
            <person name="Thibaud-Nissen F."/>
            <person name="Schobel S."/>
            <person name="Town C.D."/>
        </authorList>
    </citation>
    <scope>GENOME REANNOTATION</scope>
    <source>
        <strain>cv. Columbia</strain>
    </source>
</reference>
<reference key="4">
    <citation type="journal article" date="2003" name="Science">
        <title>Empirical analysis of transcriptional activity in the Arabidopsis genome.</title>
        <authorList>
            <person name="Yamada K."/>
            <person name="Lim J."/>
            <person name="Dale J.M."/>
            <person name="Chen H."/>
            <person name="Shinn P."/>
            <person name="Palm C.J."/>
            <person name="Southwick A.M."/>
            <person name="Wu H.C."/>
            <person name="Kim C.J."/>
            <person name="Nguyen M."/>
            <person name="Pham P.K."/>
            <person name="Cheuk R.F."/>
            <person name="Karlin-Newmann G."/>
            <person name="Liu S.X."/>
            <person name="Lam B."/>
            <person name="Sakano H."/>
            <person name="Wu T."/>
            <person name="Yu G."/>
            <person name="Miranda M."/>
            <person name="Quach H.L."/>
            <person name="Tripp M."/>
            <person name="Chang C.H."/>
            <person name="Lee J.M."/>
            <person name="Toriumi M.J."/>
            <person name="Chan M.M."/>
            <person name="Tang C.C."/>
            <person name="Onodera C.S."/>
            <person name="Deng J.M."/>
            <person name="Akiyama K."/>
            <person name="Ansari Y."/>
            <person name="Arakawa T."/>
            <person name="Banh J."/>
            <person name="Banno F."/>
            <person name="Bowser L."/>
            <person name="Brooks S.Y."/>
            <person name="Carninci P."/>
            <person name="Chao Q."/>
            <person name="Choy N."/>
            <person name="Enju A."/>
            <person name="Goldsmith A.D."/>
            <person name="Gurjal M."/>
            <person name="Hansen N.F."/>
            <person name="Hayashizaki Y."/>
            <person name="Johnson-Hopson C."/>
            <person name="Hsuan V.W."/>
            <person name="Iida K."/>
            <person name="Karnes M."/>
            <person name="Khan S."/>
            <person name="Koesema E."/>
            <person name="Ishida J."/>
            <person name="Jiang P.X."/>
            <person name="Jones T."/>
            <person name="Kawai J."/>
            <person name="Kamiya A."/>
            <person name="Meyers C."/>
            <person name="Nakajima M."/>
            <person name="Narusaka M."/>
            <person name="Seki M."/>
            <person name="Sakurai T."/>
            <person name="Satou M."/>
            <person name="Tamse R."/>
            <person name="Vaysberg M."/>
            <person name="Wallender E.K."/>
            <person name="Wong C."/>
            <person name="Yamamura Y."/>
            <person name="Yuan S."/>
            <person name="Shinozaki K."/>
            <person name="Davis R.W."/>
            <person name="Theologis A."/>
            <person name="Ecker J.R."/>
        </authorList>
    </citation>
    <scope>NUCLEOTIDE SEQUENCE [LARGE SCALE MRNA]</scope>
    <source>
        <strain>cv. Columbia</strain>
    </source>
</reference>
<reference key="5">
    <citation type="journal article" date="1996" name="Plant J.">
        <title>Further progress towards a catalogue of all Arabidopsis genes: analysis of a set of 5000 non-redundant ESTs.</title>
        <authorList>
            <person name="Cooke R."/>
            <person name="Raynal M."/>
            <person name="Laudie M."/>
            <person name="Grellet F."/>
            <person name="Delseny M."/>
            <person name="Morris P.-C."/>
            <person name="Guerrier D."/>
            <person name="Giraudat J."/>
            <person name="Quigley F."/>
            <person name="Clabault G."/>
            <person name="Li Y.-F."/>
            <person name="Mache R."/>
            <person name="Krivitzky M."/>
            <person name="Gy I.J.-J."/>
            <person name="Kreis M."/>
            <person name="Lecharny A."/>
            <person name="Parmentier Y."/>
            <person name="Marbach J."/>
            <person name="Fleck J."/>
            <person name="Clement B."/>
            <person name="Philipps G."/>
            <person name="Herve C."/>
            <person name="Bardet C."/>
            <person name="Tremousaygue D."/>
            <person name="Lescure B."/>
            <person name="Lacomme C."/>
            <person name="Roby D."/>
            <person name="Jourjon M.-F."/>
            <person name="Chabrier P."/>
            <person name="Charpenteau J.-L."/>
            <person name="Desprez T."/>
            <person name="Amselem J."/>
            <person name="Chiapello H."/>
            <person name="Hoefte H."/>
        </authorList>
    </citation>
    <scope>NUCLEOTIDE SEQUENCE [LARGE SCALE MRNA] OF 1-85</scope>
    <source>
        <strain>cv. Columbia</strain>
        <tissue>Seedling</tissue>
    </source>
</reference>
<reference key="6">
    <citation type="journal article" date="2001" name="Plant Physiol.">
        <title>The organization of cytoplasmic ribosomal protein genes in the Arabidopsis genome.</title>
        <authorList>
            <person name="Barakat A."/>
            <person name="Szick-Miranda K."/>
            <person name="Chang I.-F."/>
            <person name="Guyot R."/>
            <person name="Blanc G."/>
            <person name="Cooke R."/>
            <person name="Delseny M."/>
            <person name="Bailey-Serres J."/>
        </authorList>
    </citation>
    <scope>GENE FAMILY ORGANIZATION</scope>
    <scope>NOMENCLATURE</scope>
</reference>
<reference key="7">
    <citation type="journal article" date="2023" name="Plant Cell">
        <title>An updated nomenclature for plant ribosomal protein genes.</title>
        <authorList>
            <person name="Scarpin M.R."/>
            <person name="Busche M."/>
            <person name="Martinez R.E."/>
            <person name="Harper L.C."/>
            <person name="Reiser L."/>
            <person name="Szakonyi D."/>
            <person name="Merchante C."/>
            <person name="Lan T."/>
            <person name="Xiong W."/>
            <person name="Mo B."/>
            <person name="Tang G."/>
            <person name="Chen X."/>
            <person name="Bailey-Serres J."/>
            <person name="Browning K.S."/>
            <person name="Brunkard J.O."/>
        </authorList>
    </citation>
    <scope>NOMENCLATURE</scope>
</reference>
<name>RS3A2_ARATH</name>
<gene>
    <name evidence="1" type="primary">RPS3AB</name>
    <name type="synonym">CYC07</name>
    <name type="ordered locus">At4g34670</name>
    <name type="ORF">T4L20.250</name>
</gene>
<keyword id="KW-0963">Cytoplasm</keyword>
<keyword id="KW-1185">Reference proteome</keyword>
<keyword id="KW-0687">Ribonucleoprotein</keyword>
<keyword id="KW-0689">Ribosomal protein</keyword>
<feature type="chain" id="PRO_0000153532" description="Small ribosomal subunit protein eS1y">
    <location>
        <begin position="1"/>
        <end position="262"/>
    </location>
</feature>
<feature type="region of interest" description="Disordered" evidence="2">
    <location>
        <begin position="1"/>
        <end position="21"/>
    </location>
</feature>
<feature type="compositionally biased region" description="Basic residues" evidence="2">
    <location>
        <begin position="1"/>
        <end position="18"/>
    </location>
</feature>
<feature type="sequence conflict" description="In Ref. 5; CAA84567." evidence="4" ref="5">
    <original>A</original>
    <variation>V</variation>
    <location>
        <position position="2"/>
    </location>
</feature>
<dbReference type="EMBL" id="AJ001342">
    <property type="protein sequence ID" value="CAA04689.1"/>
    <property type="molecule type" value="mRNA"/>
</dbReference>
<dbReference type="EMBL" id="AL023094">
    <property type="protein sequence ID" value="CAA18846.1"/>
    <property type="molecule type" value="Genomic_DNA"/>
</dbReference>
<dbReference type="EMBL" id="AL161585">
    <property type="protein sequence ID" value="CAB80184.1"/>
    <property type="molecule type" value="Genomic_DNA"/>
</dbReference>
<dbReference type="EMBL" id="CP002687">
    <property type="protein sequence ID" value="AEE86408.1"/>
    <property type="molecule type" value="Genomic_DNA"/>
</dbReference>
<dbReference type="EMBL" id="AY062500">
    <property type="protein sequence ID" value="AAL32578.1"/>
    <property type="molecule type" value="mRNA"/>
</dbReference>
<dbReference type="EMBL" id="Z33754">
    <property type="protein sequence ID" value="CAA83929.1"/>
    <property type="molecule type" value="mRNA"/>
</dbReference>
<dbReference type="EMBL" id="Z35368">
    <property type="protein sequence ID" value="CAA84567.1"/>
    <property type="molecule type" value="mRNA"/>
</dbReference>
<dbReference type="PIR" id="T05287">
    <property type="entry name" value="T05287"/>
</dbReference>
<dbReference type="RefSeq" id="NP_195193.1">
    <property type="nucleotide sequence ID" value="NM_119633.4"/>
</dbReference>
<dbReference type="SMR" id="Q42262"/>
<dbReference type="BioGRID" id="14901">
    <property type="interactions" value="155"/>
</dbReference>
<dbReference type="FunCoup" id="Q42262">
    <property type="interactions" value="2957"/>
</dbReference>
<dbReference type="IntAct" id="Q42262">
    <property type="interactions" value="1"/>
</dbReference>
<dbReference type="STRING" id="3702.Q42262"/>
<dbReference type="iPTMnet" id="Q42262"/>
<dbReference type="PaxDb" id="3702-AT4G34670.1"/>
<dbReference type="ProteomicsDB" id="226884"/>
<dbReference type="DNASU" id="829619"/>
<dbReference type="EnsemblPlants" id="AT4G34670.1">
    <property type="protein sequence ID" value="AT4G34670.1"/>
    <property type="gene ID" value="AT4G34670"/>
</dbReference>
<dbReference type="GeneID" id="829619"/>
<dbReference type="Gramene" id="AT4G34670.1">
    <property type="protein sequence ID" value="AT4G34670.1"/>
    <property type="gene ID" value="AT4G34670"/>
</dbReference>
<dbReference type="KEGG" id="ath:AT4G34670"/>
<dbReference type="Araport" id="AT4G34670"/>
<dbReference type="TAIR" id="AT4G34670"/>
<dbReference type="eggNOG" id="KOG1628">
    <property type="taxonomic scope" value="Eukaryota"/>
</dbReference>
<dbReference type="HOGENOM" id="CLU_062507_0_0_1"/>
<dbReference type="InParanoid" id="Q42262"/>
<dbReference type="OMA" id="MHNDESD"/>
<dbReference type="OrthoDB" id="9834376at2759"/>
<dbReference type="PhylomeDB" id="Q42262"/>
<dbReference type="CD-CODE" id="4299E36E">
    <property type="entry name" value="Nucleolus"/>
</dbReference>
<dbReference type="PRO" id="PR:Q42262"/>
<dbReference type="Proteomes" id="UP000006548">
    <property type="component" value="Chromosome 4"/>
</dbReference>
<dbReference type="ExpressionAtlas" id="Q42262">
    <property type="expression patterns" value="baseline and differential"/>
</dbReference>
<dbReference type="GO" id="GO:0022626">
    <property type="term" value="C:cytosolic ribosome"/>
    <property type="evidence" value="ECO:0007005"/>
    <property type="project" value="TAIR"/>
</dbReference>
<dbReference type="GO" id="GO:0022627">
    <property type="term" value="C:cytosolic small ribosomal subunit"/>
    <property type="evidence" value="ECO:0007005"/>
    <property type="project" value="TAIR"/>
</dbReference>
<dbReference type="GO" id="GO:0005730">
    <property type="term" value="C:nucleolus"/>
    <property type="evidence" value="ECO:0007005"/>
    <property type="project" value="TAIR"/>
</dbReference>
<dbReference type="GO" id="GO:0009505">
    <property type="term" value="C:plant-type cell wall"/>
    <property type="evidence" value="ECO:0007005"/>
    <property type="project" value="TAIR"/>
</dbReference>
<dbReference type="GO" id="GO:0005886">
    <property type="term" value="C:plasma membrane"/>
    <property type="evidence" value="ECO:0007005"/>
    <property type="project" value="TAIR"/>
</dbReference>
<dbReference type="GO" id="GO:0009506">
    <property type="term" value="C:plasmodesma"/>
    <property type="evidence" value="ECO:0007005"/>
    <property type="project" value="TAIR"/>
</dbReference>
<dbReference type="GO" id="GO:0003729">
    <property type="term" value="F:mRNA binding"/>
    <property type="evidence" value="ECO:0000314"/>
    <property type="project" value="TAIR"/>
</dbReference>
<dbReference type="GO" id="GO:0003735">
    <property type="term" value="F:structural constituent of ribosome"/>
    <property type="evidence" value="ECO:0000314"/>
    <property type="project" value="CAFA"/>
</dbReference>
<dbReference type="GO" id="GO:0006412">
    <property type="term" value="P:translation"/>
    <property type="evidence" value="ECO:0007669"/>
    <property type="project" value="UniProtKB-UniRule"/>
</dbReference>
<dbReference type="HAMAP" id="MF_03122">
    <property type="entry name" value="Ribosomal_eS1_euk"/>
    <property type="match status" value="1"/>
</dbReference>
<dbReference type="InterPro" id="IPR001593">
    <property type="entry name" value="Ribosomal_eS1"/>
</dbReference>
<dbReference type="InterPro" id="IPR018281">
    <property type="entry name" value="Ribosomal_eS1_CS"/>
</dbReference>
<dbReference type="InterPro" id="IPR027500">
    <property type="entry name" value="Ribosomal_eS1_euk"/>
</dbReference>
<dbReference type="PANTHER" id="PTHR11830">
    <property type="entry name" value="40S RIBOSOMAL PROTEIN S3A"/>
    <property type="match status" value="1"/>
</dbReference>
<dbReference type="Pfam" id="PF01015">
    <property type="entry name" value="Ribosomal_S3Ae"/>
    <property type="match status" value="1"/>
</dbReference>
<dbReference type="SMART" id="SM01397">
    <property type="entry name" value="Ribosomal_S3Ae"/>
    <property type="match status" value="1"/>
</dbReference>
<dbReference type="PROSITE" id="PS01191">
    <property type="entry name" value="RIBOSOMAL_S3AE"/>
    <property type="match status" value="1"/>
</dbReference>
<evidence type="ECO:0000255" key="1">
    <source>
        <dbReference type="HAMAP-Rule" id="MF_03122"/>
    </source>
</evidence>
<evidence type="ECO:0000256" key="2">
    <source>
        <dbReference type="SAM" id="MobiDB-lite"/>
    </source>
</evidence>
<evidence type="ECO:0000303" key="3">
    <source>
    </source>
</evidence>
<evidence type="ECO:0000305" key="4"/>
<protein>
    <recommendedName>
        <fullName evidence="3">Small ribosomal subunit protein eS1y</fullName>
    </recommendedName>
    <alternativeName>
        <fullName evidence="1">40S ribosomal protein S3a-2</fullName>
    </alternativeName>
</protein>
<organism>
    <name type="scientific">Arabidopsis thaliana</name>
    <name type="common">Mouse-ear cress</name>
    <dbReference type="NCBI Taxonomy" id="3702"/>
    <lineage>
        <taxon>Eukaryota</taxon>
        <taxon>Viridiplantae</taxon>
        <taxon>Streptophyta</taxon>
        <taxon>Embryophyta</taxon>
        <taxon>Tracheophyta</taxon>
        <taxon>Spermatophyta</taxon>
        <taxon>Magnoliopsida</taxon>
        <taxon>eudicotyledons</taxon>
        <taxon>Gunneridae</taxon>
        <taxon>Pentapetalae</taxon>
        <taxon>rosids</taxon>
        <taxon>malvids</taxon>
        <taxon>Brassicales</taxon>
        <taxon>Brassicaceae</taxon>
        <taxon>Camelineae</taxon>
        <taxon>Arabidopsis</taxon>
    </lineage>
</organism>
<accession>Q42262</accession>
<accession>O82816</accession>
<accession>Q42293</accession>